<sequence length="130" mass="13711">MAPSAKRSGPRKQKRNVPSGVAHIQSTFNNTIVSITDPNGEVIAWASAGSSGFKGAKKGTPFAAQTAADNAARRAIDQGMRQIEVMVSGPGSGRETAIRALQAAGLEITLIRDVTPIPHNGCRPPKRRRV</sequence>
<gene>
    <name evidence="1" type="primary">rpsK</name>
    <name evidence="1" type="synonym">rps11</name>
    <name type="ordered locus">tlr0104</name>
</gene>
<proteinExistence type="inferred from homology"/>
<evidence type="ECO:0000255" key="1">
    <source>
        <dbReference type="HAMAP-Rule" id="MF_01310"/>
    </source>
</evidence>
<evidence type="ECO:0000305" key="2"/>
<comment type="function">
    <text evidence="1">Located on the platform of the 30S subunit, it bridges several disparate RNA helices of the 16S rRNA. Forms part of the Shine-Dalgarno cleft in the 70S ribosome.</text>
</comment>
<comment type="subunit">
    <text evidence="1">Part of the 30S ribosomal subunit. Interacts with proteins S7 and S18. Binds to IF-3.</text>
</comment>
<comment type="similarity">
    <text evidence="1">Belongs to the universal ribosomal protein uS11 family.</text>
</comment>
<dbReference type="EMBL" id="BA000039">
    <property type="protein sequence ID" value="BAC07657.1"/>
    <property type="molecule type" value="Genomic_DNA"/>
</dbReference>
<dbReference type="RefSeq" id="NP_680895.1">
    <property type="nucleotide sequence ID" value="NC_004113.1"/>
</dbReference>
<dbReference type="RefSeq" id="WP_011055959.1">
    <property type="nucleotide sequence ID" value="NC_004113.1"/>
</dbReference>
<dbReference type="SMR" id="P59379"/>
<dbReference type="STRING" id="197221.gene:10746682"/>
<dbReference type="EnsemblBacteria" id="BAC07657">
    <property type="protein sequence ID" value="BAC07657"/>
    <property type="gene ID" value="BAC07657"/>
</dbReference>
<dbReference type="KEGG" id="tel:tlr0104"/>
<dbReference type="PATRIC" id="fig|197221.4.peg.107"/>
<dbReference type="eggNOG" id="COG0100">
    <property type="taxonomic scope" value="Bacteria"/>
</dbReference>
<dbReference type="Proteomes" id="UP000000440">
    <property type="component" value="Chromosome"/>
</dbReference>
<dbReference type="GO" id="GO:1990904">
    <property type="term" value="C:ribonucleoprotein complex"/>
    <property type="evidence" value="ECO:0007669"/>
    <property type="project" value="UniProtKB-KW"/>
</dbReference>
<dbReference type="GO" id="GO:0005840">
    <property type="term" value="C:ribosome"/>
    <property type="evidence" value="ECO:0007669"/>
    <property type="project" value="UniProtKB-KW"/>
</dbReference>
<dbReference type="GO" id="GO:0019843">
    <property type="term" value="F:rRNA binding"/>
    <property type="evidence" value="ECO:0007669"/>
    <property type="project" value="UniProtKB-UniRule"/>
</dbReference>
<dbReference type="GO" id="GO:0003735">
    <property type="term" value="F:structural constituent of ribosome"/>
    <property type="evidence" value="ECO:0007669"/>
    <property type="project" value="InterPro"/>
</dbReference>
<dbReference type="GO" id="GO:0006412">
    <property type="term" value="P:translation"/>
    <property type="evidence" value="ECO:0007669"/>
    <property type="project" value="UniProtKB-UniRule"/>
</dbReference>
<dbReference type="FunFam" id="3.30.420.80:FF:000001">
    <property type="entry name" value="30S ribosomal protein S11"/>
    <property type="match status" value="1"/>
</dbReference>
<dbReference type="Gene3D" id="3.30.420.80">
    <property type="entry name" value="Ribosomal protein S11"/>
    <property type="match status" value="1"/>
</dbReference>
<dbReference type="HAMAP" id="MF_01310">
    <property type="entry name" value="Ribosomal_uS11"/>
    <property type="match status" value="1"/>
</dbReference>
<dbReference type="InterPro" id="IPR001971">
    <property type="entry name" value="Ribosomal_uS11"/>
</dbReference>
<dbReference type="InterPro" id="IPR019981">
    <property type="entry name" value="Ribosomal_uS11_bac-type"/>
</dbReference>
<dbReference type="InterPro" id="IPR018102">
    <property type="entry name" value="Ribosomal_uS11_CS"/>
</dbReference>
<dbReference type="InterPro" id="IPR036967">
    <property type="entry name" value="Ribosomal_uS11_sf"/>
</dbReference>
<dbReference type="NCBIfam" id="NF003698">
    <property type="entry name" value="PRK05309.1"/>
    <property type="match status" value="1"/>
</dbReference>
<dbReference type="NCBIfam" id="TIGR03632">
    <property type="entry name" value="uS11_bact"/>
    <property type="match status" value="1"/>
</dbReference>
<dbReference type="PANTHER" id="PTHR11759">
    <property type="entry name" value="40S RIBOSOMAL PROTEIN S14/30S RIBOSOMAL PROTEIN S11"/>
    <property type="match status" value="1"/>
</dbReference>
<dbReference type="Pfam" id="PF00411">
    <property type="entry name" value="Ribosomal_S11"/>
    <property type="match status" value="1"/>
</dbReference>
<dbReference type="PIRSF" id="PIRSF002131">
    <property type="entry name" value="Ribosomal_S11"/>
    <property type="match status" value="1"/>
</dbReference>
<dbReference type="SUPFAM" id="SSF53137">
    <property type="entry name" value="Translational machinery components"/>
    <property type="match status" value="1"/>
</dbReference>
<dbReference type="PROSITE" id="PS00054">
    <property type="entry name" value="RIBOSOMAL_S11"/>
    <property type="match status" value="1"/>
</dbReference>
<organism>
    <name type="scientific">Thermosynechococcus vestitus (strain NIES-2133 / IAM M-273 / BP-1)</name>
    <dbReference type="NCBI Taxonomy" id="197221"/>
    <lineage>
        <taxon>Bacteria</taxon>
        <taxon>Bacillati</taxon>
        <taxon>Cyanobacteriota</taxon>
        <taxon>Cyanophyceae</taxon>
        <taxon>Acaryochloridales</taxon>
        <taxon>Thermosynechococcaceae</taxon>
        <taxon>Thermosynechococcus</taxon>
    </lineage>
</organism>
<accession>P59379</accession>
<keyword id="KW-1185">Reference proteome</keyword>
<keyword id="KW-0687">Ribonucleoprotein</keyword>
<keyword id="KW-0689">Ribosomal protein</keyword>
<keyword id="KW-0694">RNA-binding</keyword>
<keyword id="KW-0699">rRNA-binding</keyword>
<name>RS11_THEVB</name>
<feature type="chain" id="PRO_0000123240" description="Small ribosomal subunit protein uS11">
    <location>
        <begin position="1"/>
        <end position="130"/>
    </location>
</feature>
<reference key="1">
    <citation type="journal article" date="2002" name="DNA Res.">
        <title>Complete genome structure of the thermophilic cyanobacterium Thermosynechococcus elongatus BP-1.</title>
        <authorList>
            <person name="Nakamura Y."/>
            <person name="Kaneko T."/>
            <person name="Sato S."/>
            <person name="Ikeuchi M."/>
            <person name="Katoh H."/>
            <person name="Sasamoto S."/>
            <person name="Watanabe A."/>
            <person name="Iriguchi M."/>
            <person name="Kawashima K."/>
            <person name="Kimura T."/>
            <person name="Kishida Y."/>
            <person name="Kiyokawa C."/>
            <person name="Kohara M."/>
            <person name="Matsumoto M."/>
            <person name="Matsuno A."/>
            <person name="Nakazaki N."/>
            <person name="Shimpo S."/>
            <person name="Sugimoto M."/>
            <person name="Takeuchi C."/>
            <person name="Yamada M."/>
            <person name="Tabata S."/>
        </authorList>
    </citation>
    <scope>NUCLEOTIDE SEQUENCE [LARGE SCALE GENOMIC DNA]</scope>
    <source>
        <strain>NIES-2133 / IAM M-273 / BP-1</strain>
    </source>
</reference>
<protein>
    <recommendedName>
        <fullName evidence="1">Small ribosomal subunit protein uS11</fullName>
    </recommendedName>
    <alternativeName>
        <fullName evidence="2">30S ribosomal protein S11</fullName>
    </alternativeName>
</protein>